<evidence type="ECO:0000255" key="1">
    <source>
        <dbReference type="HAMAP-Rule" id="MF_01659"/>
    </source>
</evidence>
<protein>
    <recommendedName>
        <fullName evidence="1">2-succinyl-5-enolpyruvyl-6-hydroxy-3-cyclohexene-1-carboxylate synthase</fullName>
        <shortName evidence="1">SEPHCHC synthase</shortName>
        <ecNumber evidence="1">2.2.1.9</ecNumber>
    </recommendedName>
    <alternativeName>
        <fullName evidence="1">Menaquinone biosynthesis protein MenD</fullName>
    </alternativeName>
</protein>
<sequence>MPDARAADEPAQRLPRTGNPATDYALALLAHLIGAGVRDIVVSPGSRSQALALAAAELERAGAVRLHVRLDERVGGFLALGIGRETGAPAAVVTTSGTATANLHPAVLEAHESGVPLIVITADRPPELRGIRSSQTTHQDGLYGVAVRLAKDVPAPSGEEEDVATAARLAVESVRAAVGAETADPGPVHLNLAFREPLSVAVPPLPVVERGALPALAGAQKLGRETVVPGIGPSTVVIAGADAGPEAEEYARSAGFPLLAEVSSGSRFGPNLVVAYRELLREPEFGGRVRRAVVFGHPTLSREVPALLLRDDVETVVVAPRGRQAYNPGRRAVIVGAVRPAVEADPRSPEARAWVGLWVSASRRLVEAAERVASPDATAPDLAKARSLDPSDALAFARMELAAVRAPITRPLLAEALWRHTWPHDRLVLGASRLIRDADRIVPGKRLRVHSNRGLAGIDGTIATAIGVALASQAVAVETGTLPGITRVLLGDLALLHDAGALLGGSGEAWPNVQVIVGNDGGGTIFDGLEVATIASPAAFDRVLYTPQRGDIAALSTAYGWAHRVVRTKGELDQALSAPPAGASVLEVPLER</sequence>
<keyword id="KW-0460">Magnesium</keyword>
<keyword id="KW-0464">Manganese</keyword>
<keyword id="KW-0474">Menaquinone biosynthesis</keyword>
<keyword id="KW-0479">Metal-binding</keyword>
<keyword id="KW-1185">Reference proteome</keyword>
<keyword id="KW-0786">Thiamine pyrophosphate</keyword>
<keyword id="KW-0808">Transferase</keyword>
<feature type="chain" id="PRO_0000341764" description="2-succinyl-5-enolpyruvyl-6-hydroxy-3-cyclohexene-1-carboxylate synthase">
    <location>
        <begin position="1"/>
        <end position="592"/>
    </location>
</feature>
<name>MEND_LEIXX</name>
<proteinExistence type="inferred from homology"/>
<accession>Q6AHC2</accession>
<reference key="1">
    <citation type="journal article" date="2004" name="Mol. Plant Microbe Interact.">
        <title>The genome sequence of the Gram-positive sugarcane pathogen Leifsonia xyli subsp. xyli.</title>
        <authorList>
            <person name="Monteiro-Vitorello C.B."/>
            <person name="Camargo L.E.A."/>
            <person name="Van Sluys M.A."/>
            <person name="Kitajima J.P."/>
            <person name="Truffi D."/>
            <person name="do Amaral A.M."/>
            <person name="Harakava R."/>
            <person name="de Oliveira J.C.F."/>
            <person name="Wood D."/>
            <person name="de Oliveira M.C."/>
            <person name="Miyaki C.Y."/>
            <person name="Takita M.A."/>
            <person name="da Silva A.C.R."/>
            <person name="Furlan L.R."/>
            <person name="Carraro D.M."/>
            <person name="Camarotte G."/>
            <person name="Almeida N.F. Jr."/>
            <person name="Carrer H."/>
            <person name="Coutinho L.L."/>
            <person name="El-Dorry H.A."/>
            <person name="Ferro M.I.T."/>
            <person name="Gagliardi P.R."/>
            <person name="Giglioti E."/>
            <person name="Goldman M.H.S."/>
            <person name="Goldman G.H."/>
            <person name="Kimura E.T."/>
            <person name="Ferro E.S."/>
            <person name="Kuramae E.E."/>
            <person name="Lemos E.G.M."/>
            <person name="Lemos M.V.F."/>
            <person name="Mauro S.M.Z."/>
            <person name="Machado M.A."/>
            <person name="Marino C.L."/>
            <person name="Menck C.F."/>
            <person name="Nunes L.R."/>
            <person name="Oliveira R.C."/>
            <person name="Pereira G.G."/>
            <person name="Siqueira W."/>
            <person name="de Souza A.A."/>
            <person name="Tsai S.M."/>
            <person name="Zanca A.S."/>
            <person name="Simpson A.J.G."/>
            <person name="Brumbley S.M."/>
            <person name="Setubal J.C."/>
        </authorList>
    </citation>
    <scope>NUCLEOTIDE SEQUENCE [LARGE SCALE GENOMIC DNA]</scope>
    <source>
        <strain>CTCB07</strain>
    </source>
</reference>
<gene>
    <name evidence="1" type="primary">menD</name>
    <name type="ordered locus">Lxx01490</name>
</gene>
<dbReference type="EC" id="2.2.1.9" evidence="1"/>
<dbReference type="EMBL" id="AE016822">
    <property type="protein sequence ID" value="AAT88223.1"/>
    <property type="molecule type" value="Genomic_DNA"/>
</dbReference>
<dbReference type="RefSeq" id="WP_011185228.1">
    <property type="nucleotide sequence ID" value="NC_006087.1"/>
</dbReference>
<dbReference type="SMR" id="Q6AHC2"/>
<dbReference type="STRING" id="281090.Lxx01490"/>
<dbReference type="KEGG" id="lxx:Lxx01490"/>
<dbReference type="eggNOG" id="COG1165">
    <property type="taxonomic scope" value="Bacteria"/>
</dbReference>
<dbReference type="HOGENOM" id="CLU_006051_4_0_11"/>
<dbReference type="UniPathway" id="UPA00079"/>
<dbReference type="UniPathway" id="UPA01057">
    <property type="reaction ID" value="UER00164"/>
</dbReference>
<dbReference type="Proteomes" id="UP000001306">
    <property type="component" value="Chromosome"/>
</dbReference>
<dbReference type="GO" id="GO:0070204">
    <property type="term" value="F:2-succinyl-5-enolpyruvyl-6-hydroxy-3-cyclohexene-1-carboxylic-acid synthase activity"/>
    <property type="evidence" value="ECO:0007669"/>
    <property type="project" value="UniProtKB-UniRule"/>
</dbReference>
<dbReference type="GO" id="GO:0000287">
    <property type="term" value="F:magnesium ion binding"/>
    <property type="evidence" value="ECO:0007669"/>
    <property type="project" value="UniProtKB-UniRule"/>
</dbReference>
<dbReference type="GO" id="GO:0030145">
    <property type="term" value="F:manganese ion binding"/>
    <property type="evidence" value="ECO:0007669"/>
    <property type="project" value="UniProtKB-UniRule"/>
</dbReference>
<dbReference type="GO" id="GO:0030976">
    <property type="term" value="F:thiamine pyrophosphate binding"/>
    <property type="evidence" value="ECO:0007669"/>
    <property type="project" value="UniProtKB-UniRule"/>
</dbReference>
<dbReference type="GO" id="GO:0009234">
    <property type="term" value="P:menaquinone biosynthetic process"/>
    <property type="evidence" value="ECO:0007669"/>
    <property type="project" value="UniProtKB-UniRule"/>
</dbReference>
<dbReference type="CDD" id="cd07037">
    <property type="entry name" value="TPP_PYR_MenD"/>
    <property type="match status" value="1"/>
</dbReference>
<dbReference type="CDD" id="cd02009">
    <property type="entry name" value="TPP_SHCHC_synthase"/>
    <property type="match status" value="1"/>
</dbReference>
<dbReference type="Gene3D" id="3.40.50.970">
    <property type="match status" value="2"/>
</dbReference>
<dbReference type="Gene3D" id="3.40.50.1220">
    <property type="entry name" value="TPP-binding domain"/>
    <property type="match status" value="1"/>
</dbReference>
<dbReference type="HAMAP" id="MF_01659">
    <property type="entry name" value="MenD"/>
    <property type="match status" value="1"/>
</dbReference>
<dbReference type="InterPro" id="IPR004433">
    <property type="entry name" value="MenaQ_synth_MenD"/>
</dbReference>
<dbReference type="InterPro" id="IPR029061">
    <property type="entry name" value="THDP-binding"/>
</dbReference>
<dbReference type="InterPro" id="IPR012001">
    <property type="entry name" value="Thiamin_PyroP_enz_TPP-bd_dom"/>
</dbReference>
<dbReference type="NCBIfam" id="TIGR00173">
    <property type="entry name" value="menD"/>
    <property type="match status" value="1"/>
</dbReference>
<dbReference type="PANTHER" id="PTHR42916">
    <property type="entry name" value="2-SUCCINYL-5-ENOLPYRUVYL-6-HYDROXY-3-CYCLOHEXENE-1-CARBOXYLATE SYNTHASE"/>
    <property type="match status" value="1"/>
</dbReference>
<dbReference type="PANTHER" id="PTHR42916:SF1">
    <property type="entry name" value="PROTEIN PHYLLO, CHLOROPLASTIC"/>
    <property type="match status" value="1"/>
</dbReference>
<dbReference type="Pfam" id="PF02776">
    <property type="entry name" value="TPP_enzyme_N"/>
    <property type="match status" value="1"/>
</dbReference>
<dbReference type="PIRSF" id="PIRSF004983">
    <property type="entry name" value="MenD"/>
    <property type="match status" value="1"/>
</dbReference>
<dbReference type="SUPFAM" id="SSF52518">
    <property type="entry name" value="Thiamin diphosphate-binding fold (THDP-binding)"/>
    <property type="match status" value="2"/>
</dbReference>
<organism>
    <name type="scientific">Leifsonia xyli subsp. xyli (strain CTCB07)</name>
    <dbReference type="NCBI Taxonomy" id="281090"/>
    <lineage>
        <taxon>Bacteria</taxon>
        <taxon>Bacillati</taxon>
        <taxon>Actinomycetota</taxon>
        <taxon>Actinomycetes</taxon>
        <taxon>Micrococcales</taxon>
        <taxon>Microbacteriaceae</taxon>
        <taxon>Leifsonia</taxon>
    </lineage>
</organism>
<comment type="function">
    <text evidence="1">Catalyzes the thiamine diphosphate-dependent decarboxylation of 2-oxoglutarate and the subsequent addition of the resulting succinic semialdehyde-thiamine pyrophosphate anion to isochorismate to yield 2-succinyl-5-enolpyruvyl-6-hydroxy-3-cyclohexene-1-carboxylate (SEPHCHC).</text>
</comment>
<comment type="catalytic activity">
    <reaction evidence="1">
        <text>isochorismate + 2-oxoglutarate + H(+) = 5-enolpyruvoyl-6-hydroxy-2-succinyl-cyclohex-3-ene-1-carboxylate + CO2</text>
        <dbReference type="Rhea" id="RHEA:25593"/>
        <dbReference type="ChEBI" id="CHEBI:15378"/>
        <dbReference type="ChEBI" id="CHEBI:16526"/>
        <dbReference type="ChEBI" id="CHEBI:16810"/>
        <dbReference type="ChEBI" id="CHEBI:29780"/>
        <dbReference type="ChEBI" id="CHEBI:58818"/>
        <dbReference type="EC" id="2.2.1.9"/>
    </reaction>
</comment>
<comment type="cofactor">
    <cofactor evidence="1">
        <name>Mg(2+)</name>
        <dbReference type="ChEBI" id="CHEBI:18420"/>
    </cofactor>
    <cofactor evidence="1">
        <name>Mn(2+)</name>
        <dbReference type="ChEBI" id="CHEBI:29035"/>
    </cofactor>
</comment>
<comment type="cofactor">
    <cofactor evidence="1">
        <name>thiamine diphosphate</name>
        <dbReference type="ChEBI" id="CHEBI:58937"/>
    </cofactor>
    <text evidence="1">Binds 1 thiamine pyrophosphate per subunit.</text>
</comment>
<comment type="pathway">
    <text evidence="1">Quinol/quinone metabolism; 1,4-dihydroxy-2-naphthoate biosynthesis; 1,4-dihydroxy-2-naphthoate from chorismate: step 2/7.</text>
</comment>
<comment type="pathway">
    <text evidence="1">Quinol/quinone metabolism; menaquinone biosynthesis.</text>
</comment>
<comment type="subunit">
    <text evidence="1">Homodimer.</text>
</comment>
<comment type="similarity">
    <text evidence="1">Belongs to the TPP enzyme family. MenD subfamily.</text>
</comment>